<feature type="chain" id="PRO_0000251104" description="Uncharacterized protein L144">
    <location>
        <begin position="1"/>
        <end position="233"/>
    </location>
</feature>
<reference key="1">
    <citation type="journal article" date="2004" name="Science">
        <title>The 1.2-megabase genome sequence of Mimivirus.</title>
        <authorList>
            <person name="Raoult D."/>
            <person name="Audic S."/>
            <person name="Robert C."/>
            <person name="Abergel C."/>
            <person name="Renesto P."/>
            <person name="Ogata H."/>
            <person name="La Scola B."/>
            <person name="Susan M."/>
            <person name="Claverie J.-M."/>
        </authorList>
    </citation>
    <scope>NUCLEOTIDE SEQUENCE [LARGE SCALE GENOMIC DNA]</scope>
    <source>
        <strain>Rowbotham-Bradford</strain>
    </source>
</reference>
<gene>
    <name type="ordered locus">MIMI_L144</name>
</gene>
<dbReference type="EMBL" id="AY653733">
    <property type="protein sequence ID" value="AAV50419.1"/>
    <property type="molecule type" value="Genomic_DNA"/>
</dbReference>
<dbReference type="KEGG" id="vg:9924744"/>
<dbReference type="OrthoDB" id="39793at10239"/>
<dbReference type="Proteomes" id="UP000001134">
    <property type="component" value="Genome"/>
</dbReference>
<sequence>MQSYVICVNNQCNVYLANNTKQLFDYILTNIDEFRKLFKFMRFTNSPIKKYLSDFYEICLKDSHTNLFDKSEWISTKEKLIERLKLIGYSSFFKRINGIDTDLFSSTNTLGTIRFYKANKTIDADSDYDSNNASENNFDNNDDDDDCYYTNKSLTNENQNEDQDENQNEITEEIDNPINRLLEQKISNGQKMTNSQFMCKMIDIFDSDRTYKNFDLISKLGGKLWILHENIHE</sequence>
<keyword id="KW-1185">Reference proteome</keyword>
<name>YL144_MIMIV</name>
<organismHost>
    <name type="scientific">Acanthamoeba polyphaga</name>
    <name type="common">Amoeba</name>
    <dbReference type="NCBI Taxonomy" id="5757"/>
</organismHost>
<organism>
    <name type="scientific">Acanthamoeba polyphaga mimivirus</name>
    <name type="common">APMV</name>
    <dbReference type="NCBI Taxonomy" id="212035"/>
    <lineage>
        <taxon>Viruses</taxon>
        <taxon>Varidnaviria</taxon>
        <taxon>Bamfordvirae</taxon>
        <taxon>Nucleocytoviricota</taxon>
        <taxon>Megaviricetes</taxon>
        <taxon>Imitervirales</taxon>
        <taxon>Mimiviridae</taxon>
        <taxon>Megamimivirinae</taxon>
        <taxon>Mimivirus</taxon>
        <taxon>Mimivirus bradfordmassiliense</taxon>
    </lineage>
</organism>
<accession>Q5URA4</accession>
<proteinExistence type="predicted"/>
<protein>
    <recommendedName>
        <fullName>Uncharacterized protein L144</fullName>
    </recommendedName>
</protein>